<name>GMUD_BACSU</name>
<accession>O05508</accession>
<accession>Q797D9</accession>
<gene>
    <name type="primary">gmuD</name>
    <name type="synonym">bglD</name>
    <name type="synonym">ydhP</name>
    <name type="ordered locus">BSU05840</name>
</gene>
<organism>
    <name type="scientific">Bacillus subtilis (strain 168)</name>
    <dbReference type="NCBI Taxonomy" id="224308"/>
    <lineage>
        <taxon>Bacteria</taxon>
        <taxon>Bacillati</taxon>
        <taxon>Bacillota</taxon>
        <taxon>Bacilli</taxon>
        <taxon>Bacillales</taxon>
        <taxon>Bacillaceae</taxon>
        <taxon>Bacillus</taxon>
    </lineage>
</organism>
<protein>
    <recommendedName>
        <fullName>6-phospho-beta-glucosidase GmuD</fullName>
        <ecNumber>3.2.1.86</ecNumber>
    </recommendedName>
    <alternativeName>
        <fullName>Aryl-phospho-beta-D-glucosidase BglD</fullName>
    </alternativeName>
    <alternativeName>
        <fullName>Glucomannan utilization protein D</fullName>
    </alternativeName>
</protein>
<reference key="1">
    <citation type="journal article" date="1997" name="Microbiology">
        <title>Nucleotide sequence and analysis of the phoB-rrnE-groESL region of the Bacillus subtilis chromosome.</title>
        <authorList>
            <person name="Sadaie Y."/>
            <person name="Yata K."/>
            <person name="Fujita M."/>
            <person name="Sagai H."/>
            <person name="Itaya M."/>
            <person name="Kasahara Y."/>
            <person name="Ogasawara N."/>
        </authorList>
    </citation>
    <scope>NUCLEOTIDE SEQUENCE [GENOMIC DNA]</scope>
    <source>
        <strain>168 / JH642</strain>
    </source>
</reference>
<reference key="2">
    <citation type="journal article" date="1997" name="Nature">
        <title>The complete genome sequence of the Gram-positive bacterium Bacillus subtilis.</title>
        <authorList>
            <person name="Kunst F."/>
            <person name="Ogasawara N."/>
            <person name="Moszer I."/>
            <person name="Albertini A.M."/>
            <person name="Alloni G."/>
            <person name="Azevedo V."/>
            <person name="Bertero M.G."/>
            <person name="Bessieres P."/>
            <person name="Bolotin A."/>
            <person name="Borchert S."/>
            <person name="Borriss R."/>
            <person name="Boursier L."/>
            <person name="Brans A."/>
            <person name="Braun M."/>
            <person name="Brignell S.C."/>
            <person name="Bron S."/>
            <person name="Brouillet S."/>
            <person name="Bruschi C.V."/>
            <person name="Caldwell B."/>
            <person name="Capuano V."/>
            <person name="Carter N.M."/>
            <person name="Choi S.-K."/>
            <person name="Codani J.-J."/>
            <person name="Connerton I.F."/>
            <person name="Cummings N.J."/>
            <person name="Daniel R.A."/>
            <person name="Denizot F."/>
            <person name="Devine K.M."/>
            <person name="Duesterhoeft A."/>
            <person name="Ehrlich S.D."/>
            <person name="Emmerson P.T."/>
            <person name="Entian K.-D."/>
            <person name="Errington J."/>
            <person name="Fabret C."/>
            <person name="Ferrari E."/>
            <person name="Foulger D."/>
            <person name="Fritz C."/>
            <person name="Fujita M."/>
            <person name="Fujita Y."/>
            <person name="Fuma S."/>
            <person name="Galizzi A."/>
            <person name="Galleron N."/>
            <person name="Ghim S.-Y."/>
            <person name="Glaser P."/>
            <person name="Goffeau A."/>
            <person name="Golightly E.J."/>
            <person name="Grandi G."/>
            <person name="Guiseppi G."/>
            <person name="Guy B.J."/>
            <person name="Haga K."/>
            <person name="Haiech J."/>
            <person name="Harwood C.R."/>
            <person name="Henaut A."/>
            <person name="Hilbert H."/>
            <person name="Holsappel S."/>
            <person name="Hosono S."/>
            <person name="Hullo M.-F."/>
            <person name="Itaya M."/>
            <person name="Jones L.-M."/>
            <person name="Joris B."/>
            <person name="Karamata D."/>
            <person name="Kasahara Y."/>
            <person name="Klaerr-Blanchard M."/>
            <person name="Klein C."/>
            <person name="Kobayashi Y."/>
            <person name="Koetter P."/>
            <person name="Koningstein G."/>
            <person name="Krogh S."/>
            <person name="Kumano M."/>
            <person name="Kurita K."/>
            <person name="Lapidus A."/>
            <person name="Lardinois S."/>
            <person name="Lauber J."/>
            <person name="Lazarevic V."/>
            <person name="Lee S.-M."/>
            <person name="Levine A."/>
            <person name="Liu H."/>
            <person name="Masuda S."/>
            <person name="Mauel C."/>
            <person name="Medigue C."/>
            <person name="Medina N."/>
            <person name="Mellado R.P."/>
            <person name="Mizuno M."/>
            <person name="Moestl D."/>
            <person name="Nakai S."/>
            <person name="Noback M."/>
            <person name="Noone D."/>
            <person name="O'Reilly M."/>
            <person name="Ogawa K."/>
            <person name="Ogiwara A."/>
            <person name="Oudega B."/>
            <person name="Park S.-H."/>
            <person name="Parro V."/>
            <person name="Pohl T.M."/>
            <person name="Portetelle D."/>
            <person name="Porwollik S."/>
            <person name="Prescott A.M."/>
            <person name="Presecan E."/>
            <person name="Pujic P."/>
            <person name="Purnelle B."/>
            <person name="Rapoport G."/>
            <person name="Rey M."/>
            <person name="Reynolds S."/>
            <person name="Rieger M."/>
            <person name="Rivolta C."/>
            <person name="Rocha E."/>
            <person name="Roche B."/>
            <person name="Rose M."/>
            <person name="Sadaie Y."/>
            <person name="Sato T."/>
            <person name="Scanlan E."/>
            <person name="Schleich S."/>
            <person name="Schroeter R."/>
            <person name="Scoffone F."/>
            <person name="Sekiguchi J."/>
            <person name="Sekowska A."/>
            <person name="Seror S.J."/>
            <person name="Serror P."/>
            <person name="Shin B.-S."/>
            <person name="Soldo B."/>
            <person name="Sorokin A."/>
            <person name="Tacconi E."/>
            <person name="Takagi T."/>
            <person name="Takahashi H."/>
            <person name="Takemaru K."/>
            <person name="Takeuchi M."/>
            <person name="Tamakoshi A."/>
            <person name="Tanaka T."/>
            <person name="Terpstra P."/>
            <person name="Tognoni A."/>
            <person name="Tosato V."/>
            <person name="Uchiyama S."/>
            <person name="Vandenbol M."/>
            <person name="Vannier F."/>
            <person name="Vassarotti A."/>
            <person name="Viari A."/>
            <person name="Wambutt R."/>
            <person name="Wedler E."/>
            <person name="Wedler H."/>
            <person name="Weitzenegger T."/>
            <person name="Winters P."/>
            <person name="Wipat A."/>
            <person name="Yamamoto H."/>
            <person name="Yamane K."/>
            <person name="Yasumoto K."/>
            <person name="Yata K."/>
            <person name="Yoshida K."/>
            <person name="Yoshikawa H.-F."/>
            <person name="Zumstein E."/>
            <person name="Yoshikawa H."/>
            <person name="Danchin A."/>
        </authorList>
    </citation>
    <scope>NUCLEOTIDE SEQUENCE [LARGE SCALE GENOMIC DNA]</scope>
    <source>
        <strain>168</strain>
    </source>
</reference>
<reference key="3">
    <citation type="journal article" date="2004" name="Arch. Microbiol.">
        <title>Identification of aryl-phospho-beta-D-glucosidases in Bacillus subtilis.</title>
        <authorList>
            <person name="Setlow B."/>
            <person name="Cabrera-Hernandez A."/>
            <person name="Cabrera-Martinez R.M."/>
            <person name="Setlow P."/>
        </authorList>
    </citation>
    <scope>FUNCTION AS AN ARYL-PHOSPHO-BETA-D-GLUCOSIDASE</scope>
    <scope>DEVELOPMENTAL STAGE</scope>
    <scope>INDUCTION</scope>
    <source>
        <strain>168 / PS832</strain>
    </source>
</reference>
<reference key="4">
    <citation type="journal article" date="2008" name="FEMS Microbiol. Lett.">
        <title>Glucomannan utilization operon of Bacillus subtilis.</title>
        <authorList>
            <person name="Sadaie Y."/>
            <person name="Nakadate H."/>
            <person name="Fukui R."/>
            <person name="Yee L.M."/>
            <person name="Asai K."/>
        </authorList>
    </citation>
    <scope>INDUCTION BY GLUCOMANNAN</scope>
    <scope>FUNCTION IN GLUCOMANNAN UTILIZATION</scope>
    <source>
        <strain>168</strain>
    </source>
</reference>
<feature type="chain" id="PRO_0000371418" description="6-phospho-beta-glucosidase GmuD">
    <location>
        <begin position="1"/>
        <end position="465"/>
    </location>
</feature>
<feature type="active site" description="Proton donor" evidence="1">
    <location>
        <position position="170"/>
    </location>
</feature>
<feature type="active site" description="Nucleophile" evidence="2">
    <location>
        <position position="368"/>
    </location>
</feature>
<sequence>MAHTEQYRFPKDFWWGSSASATQMEGAADRDGKGQNIWDYWFEKEPHRFFDHVGPADTSQFYDNYKEDIRLMKELGHNSFRMSISWSRLIPNGTGEINDKAADFYNNVIDELIANGIEPFVNLFHFDMPMALQKIGGWVNRETVDAYENYARTCFRLFGGRVKKWFTHNEPIVPVEGGYLYDFHYPNKVDFKEAVQVGFHTMLSSARAIQAYREMKQDGKIGIILNLTPSYPRSSHPADVKAGEIADAFFNRSFLDPSVKGEFPKELVDILKHEGFMPDYNAEDLDIIKKNTVDLLGVNYYQPRRVKAKEHLPNPDAPFLPDRYFDPYVMPGRKMNPHRGWEIYEKGVYDILINLKENYGNIECFISENGMGVEGEERFRDEQGIIQDDYRIEFIKEHLKWIHRAIQEGSNVKGYHLWTFMDNWSWTNAYKNRYGFVSVNLEKDGERTVKKSGKWFKEVAEHSGF</sequence>
<evidence type="ECO:0000255" key="1"/>
<evidence type="ECO:0000255" key="2">
    <source>
        <dbReference type="PROSITE-ProRule" id="PRU10055"/>
    </source>
</evidence>
<evidence type="ECO:0000269" key="3">
    <source>
    </source>
</evidence>
<evidence type="ECO:0000269" key="4">
    <source>
    </source>
</evidence>
<evidence type="ECO:0000305" key="5"/>
<comment type="function">
    <text evidence="3 4">Phospho-beta-D-glucosidase that seems to be involved in the degradation of glucomannan. Is also capable of hydrolyzing aryl-phospho-beta-D-glucosides, although very weakly, and plays only a minor role, if any, in the degradation of these substrates in vivo.</text>
</comment>
<comment type="catalytic activity">
    <reaction>
        <text>6-phospho-beta-D-glucosyl-(1-&gt;4)-D-glucose + H2O = D-glucose 6-phosphate + D-glucose</text>
        <dbReference type="Rhea" id="RHEA:10772"/>
        <dbReference type="ChEBI" id="CHEBI:4167"/>
        <dbReference type="ChEBI" id="CHEBI:15377"/>
        <dbReference type="ChEBI" id="CHEBI:58312"/>
        <dbReference type="ChEBI" id="CHEBI:61548"/>
        <dbReference type="EC" id="3.2.1.86"/>
    </reaction>
</comment>
<comment type="developmental stage">
    <text evidence="3">Expressed at only a very low level in exponential-phase cells and germinating spores, but is expressed at a higher levels upon entry into the stationary phase of growth.</text>
</comment>
<comment type="induction">
    <text evidence="3 4">Up-regulated by konjac glucomannan and by cellobiose and mannobiose, the possible degradation products of glucomannan. Repressed by glucose via the carbon catabolite repression system. Also repressed by GmuR. Is not induced by aryl-beta-D-glucosides such as arbutin or salicin.</text>
</comment>
<comment type="similarity">
    <text evidence="5">Belongs to the glycosyl hydrolase 1 family.</text>
</comment>
<dbReference type="EC" id="3.2.1.86"/>
<dbReference type="EMBL" id="D88802">
    <property type="protein sequence ID" value="BAA19708.1"/>
    <property type="molecule type" value="Genomic_DNA"/>
</dbReference>
<dbReference type="EMBL" id="AL009126">
    <property type="protein sequence ID" value="CAB12403.1"/>
    <property type="molecule type" value="Genomic_DNA"/>
</dbReference>
<dbReference type="PIR" id="D69785">
    <property type="entry name" value="D69785"/>
</dbReference>
<dbReference type="RefSeq" id="NP_388465.1">
    <property type="nucleotide sequence ID" value="NC_000964.3"/>
</dbReference>
<dbReference type="RefSeq" id="WP_003243625.1">
    <property type="nucleotide sequence ID" value="NZ_OZ025638.1"/>
</dbReference>
<dbReference type="SMR" id="O05508"/>
<dbReference type="FunCoup" id="O05508">
    <property type="interactions" value="168"/>
</dbReference>
<dbReference type="STRING" id="224308.BSU05840"/>
<dbReference type="CAZy" id="GH1">
    <property type="family name" value="Glycoside Hydrolase Family 1"/>
</dbReference>
<dbReference type="PaxDb" id="224308-BSU05840"/>
<dbReference type="EnsemblBacteria" id="CAB12403">
    <property type="protein sequence ID" value="CAB12403"/>
    <property type="gene ID" value="BSU_05840"/>
</dbReference>
<dbReference type="GeneID" id="939872"/>
<dbReference type="KEGG" id="bsu:BSU05840"/>
<dbReference type="PATRIC" id="fig|224308.179.peg.628"/>
<dbReference type="eggNOG" id="COG2723">
    <property type="taxonomic scope" value="Bacteria"/>
</dbReference>
<dbReference type="InParanoid" id="O05508"/>
<dbReference type="OrthoDB" id="9765195at2"/>
<dbReference type="PhylomeDB" id="O05508"/>
<dbReference type="BioCyc" id="BSUB:BSU05840-MONOMER"/>
<dbReference type="Proteomes" id="UP000001570">
    <property type="component" value="Chromosome"/>
</dbReference>
<dbReference type="GO" id="GO:0005829">
    <property type="term" value="C:cytosol"/>
    <property type="evidence" value="ECO:0000318"/>
    <property type="project" value="GO_Central"/>
</dbReference>
<dbReference type="GO" id="GO:0008706">
    <property type="term" value="F:6-phospho-beta-glucosidase activity"/>
    <property type="evidence" value="ECO:0007669"/>
    <property type="project" value="UniProtKB-EC"/>
</dbReference>
<dbReference type="GO" id="GO:0008422">
    <property type="term" value="F:beta-glucosidase activity"/>
    <property type="evidence" value="ECO:0000318"/>
    <property type="project" value="GO_Central"/>
</dbReference>
<dbReference type="GO" id="GO:0016052">
    <property type="term" value="P:carbohydrate catabolic process"/>
    <property type="evidence" value="ECO:0000318"/>
    <property type="project" value="GO_Central"/>
</dbReference>
<dbReference type="GO" id="GO:0000272">
    <property type="term" value="P:polysaccharide catabolic process"/>
    <property type="evidence" value="ECO:0007669"/>
    <property type="project" value="UniProtKB-KW"/>
</dbReference>
<dbReference type="FunFam" id="3.20.20.80:FF:000004">
    <property type="entry name" value="Beta-glucosidase 6-phospho-beta-glucosidase"/>
    <property type="match status" value="1"/>
</dbReference>
<dbReference type="Gene3D" id="3.20.20.80">
    <property type="entry name" value="Glycosidases"/>
    <property type="match status" value="1"/>
</dbReference>
<dbReference type="InterPro" id="IPR001360">
    <property type="entry name" value="Glyco_hydro_1"/>
</dbReference>
<dbReference type="InterPro" id="IPR018120">
    <property type="entry name" value="Glyco_hydro_1_AS"/>
</dbReference>
<dbReference type="InterPro" id="IPR017853">
    <property type="entry name" value="Glycoside_hydrolase_SF"/>
</dbReference>
<dbReference type="PANTHER" id="PTHR10353:SF139">
    <property type="entry name" value="6-PHOSPHO-BETA-GLUCOSIDASE GMUD"/>
    <property type="match status" value="1"/>
</dbReference>
<dbReference type="PANTHER" id="PTHR10353">
    <property type="entry name" value="GLYCOSYL HYDROLASE"/>
    <property type="match status" value="1"/>
</dbReference>
<dbReference type="Pfam" id="PF00232">
    <property type="entry name" value="Glyco_hydro_1"/>
    <property type="match status" value="1"/>
</dbReference>
<dbReference type="PRINTS" id="PR00131">
    <property type="entry name" value="GLHYDRLASE1"/>
</dbReference>
<dbReference type="SUPFAM" id="SSF51445">
    <property type="entry name" value="(Trans)glycosidases"/>
    <property type="match status" value="1"/>
</dbReference>
<dbReference type="PROSITE" id="PS00572">
    <property type="entry name" value="GLYCOSYL_HYDROL_F1_1"/>
    <property type="match status" value="1"/>
</dbReference>
<proteinExistence type="evidence at protein level"/>
<keyword id="KW-0119">Carbohydrate metabolism</keyword>
<keyword id="KW-0326">Glycosidase</keyword>
<keyword id="KW-0378">Hydrolase</keyword>
<keyword id="KW-0624">Polysaccharide degradation</keyword>
<keyword id="KW-1185">Reference proteome</keyword>